<gene>
    <name evidence="1" type="primary">gltX</name>
    <name type="ordered locus">SACOL0574</name>
</gene>
<organism>
    <name type="scientific">Staphylococcus aureus (strain COL)</name>
    <dbReference type="NCBI Taxonomy" id="93062"/>
    <lineage>
        <taxon>Bacteria</taxon>
        <taxon>Bacillati</taxon>
        <taxon>Bacillota</taxon>
        <taxon>Bacilli</taxon>
        <taxon>Bacillales</taxon>
        <taxon>Staphylococcaceae</taxon>
        <taxon>Staphylococcus</taxon>
    </lineage>
</organism>
<sequence length="484" mass="56304">MSDRIRVRYAPSPTGYLHIGNARTALFNYLYAKHYNGDFVIRIEDTDKKRNLEDGETSQFDNLKWLGLDWDESVDKDNGYGPYRQSERQHIYQPLIDQLLAEDKAYKCYMTEEELEAEREAQIARGEMPRYGGQHAHLTEEQRQQFEAEGRQPSIRFRVPQNQTYSFDDMVKGNISFDSNGIGDWVIVKKDGIPTYNFAVAIDDHYMQISDVIRGDDHISNTPKQIMIYEAFGWEPPRFGHMSLIVNEERKKLSKRDGQILQFIEQYRDLGYLPEALFNFIALLGWSPEGEEEIFSKEEFIKIFDEKRLSKSPAFFDKQKLAWVNNQYMKQKDTETVFQLALPHLIKANLIPEVPSEEDLSWGRKLIALYQKEMSYAGEIVPLSEMFFKEMPALGEEEQQVINGKQVPELMTHLFSKLEALEPFESAEIKKTIKEVQKETGIKGKQLFMPIRVAVTGQMHGPELPNTIEVLGKEKVLNRLKQYK</sequence>
<keyword id="KW-0030">Aminoacyl-tRNA synthetase</keyword>
<keyword id="KW-0067">ATP-binding</keyword>
<keyword id="KW-0963">Cytoplasm</keyword>
<keyword id="KW-0436">Ligase</keyword>
<keyword id="KW-0547">Nucleotide-binding</keyword>
<keyword id="KW-0648">Protein biosynthesis</keyword>
<accession>Q5HIE7</accession>
<protein>
    <recommendedName>
        <fullName evidence="1">Glutamate--tRNA ligase</fullName>
        <ecNumber evidence="1">6.1.1.17</ecNumber>
    </recommendedName>
    <alternativeName>
        <fullName evidence="1">Glutamyl-tRNA synthetase</fullName>
        <shortName evidence="1">GluRS</shortName>
    </alternativeName>
</protein>
<name>SYE_STAAC</name>
<feature type="chain" id="PRO_0000119651" description="Glutamate--tRNA ligase">
    <location>
        <begin position="1"/>
        <end position="484"/>
    </location>
</feature>
<feature type="short sequence motif" description="'HIGH' region" evidence="1">
    <location>
        <begin position="11"/>
        <end position="21"/>
    </location>
</feature>
<feature type="short sequence motif" description="'KMSKS' region" evidence="1">
    <location>
        <begin position="252"/>
        <end position="256"/>
    </location>
</feature>
<feature type="binding site" evidence="1">
    <location>
        <position position="255"/>
    </location>
    <ligand>
        <name>ATP</name>
        <dbReference type="ChEBI" id="CHEBI:30616"/>
    </ligand>
</feature>
<dbReference type="EC" id="6.1.1.17" evidence="1"/>
<dbReference type="EMBL" id="CP000046">
    <property type="protein sequence ID" value="AAW37684.1"/>
    <property type="molecule type" value="Genomic_DNA"/>
</dbReference>
<dbReference type="RefSeq" id="WP_001283795.1">
    <property type="nucleotide sequence ID" value="NC_002951.2"/>
</dbReference>
<dbReference type="SMR" id="Q5HIE7"/>
<dbReference type="KEGG" id="sac:SACOL0574"/>
<dbReference type="HOGENOM" id="CLU_015768_6_1_9"/>
<dbReference type="Proteomes" id="UP000000530">
    <property type="component" value="Chromosome"/>
</dbReference>
<dbReference type="GO" id="GO:0005829">
    <property type="term" value="C:cytosol"/>
    <property type="evidence" value="ECO:0007669"/>
    <property type="project" value="TreeGrafter"/>
</dbReference>
<dbReference type="GO" id="GO:0005524">
    <property type="term" value="F:ATP binding"/>
    <property type="evidence" value="ECO:0007669"/>
    <property type="project" value="UniProtKB-UniRule"/>
</dbReference>
<dbReference type="GO" id="GO:0004818">
    <property type="term" value="F:glutamate-tRNA ligase activity"/>
    <property type="evidence" value="ECO:0007669"/>
    <property type="project" value="UniProtKB-UniRule"/>
</dbReference>
<dbReference type="GO" id="GO:0000049">
    <property type="term" value="F:tRNA binding"/>
    <property type="evidence" value="ECO:0007669"/>
    <property type="project" value="InterPro"/>
</dbReference>
<dbReference type="GO" id="GO:0008270">
    <property type="term" value="F:zinc ion binding"/>
    <property type="evidence" value="ECO:0007669"/>
    <property type="project" value="InterPro"/>
</dbReference>
<dbReference type="GO" id="GO:0006424">
    <property type="term" value="P:glutamyl-tRNA aminoacylation"/>
    <property type="evidence" value="ECO:0007669"/>
    <property type="project" value="UniProtKB-UniRule"/>
</dbReference>
<dbReference type="CDD" id="cd00808">
    <property type="entry name" value="GluRS_core"/>
    <property type="match status" value="1"/>
</dbReference>
<dbReference type="FunFam" id="1.10.10.350:FF:000002">
    <property type="entry name" value="Glutamate--tRNA ligase"/>
    <property type="match status" value="1"/>
</dbReference>
<dbReference type="FunFam" id="3.40.50.620:FF:000007">
    <property type="entry name" value="Glutamate--tRNA ligase"/>
    <property type="match status" value="1"/>
</dbReference>
<dbReference type="Gene3D" id="1.10.10.350">
    <property type="match status" value="1"/>
</dbReference>
<dbReference type="Gene3D" id="3.40.50.620">
    <property type="entry name" value="HUPs"/>
    <property type="match status" value="1"/>
</dbReference>
<dbReference type="HAMAP" id="MF_00022">
    <property type="entry name" value="Glu_tRNA_synth_type1"/>
    <property type="match status" value="1"/>
</dbReference>
<dbReference type="InterPro" id="IPR045462">
    <property type="entry name" value="aa-tRNA-synth_I_cd-bd"/>
</dbReference>
<dbReference type="InterPro" id="IPR020751">
    <property type="entry name" value="aa-tRNA-synth_I_codon-bd_sub2"/>
</dbReference>
<dbReference type="InterPro" id="IPR001412">
    <property type="entry name" value="aa-tRNA-synth_I_CS"/>
</dbReference>
<dbReference type="InterPro" id="IPR008925">
    <property type="entry name" value="aa_tRNA-synth_I_cd-bd_sf"/>
</dbReference>
<dbReference type="InterPro" id="IPR004527">
    <property type="entry name" value="Glu-tRNA-ligase_bac/mito"/>
</dbReference>
<dbReference type="InterPro" id="IPR000924">
    <property type="entry name" value="Glu/Gln-tRNA-synth"/>
</dbReference>
<dbReference type="InterPro" id="IPR020058">
    <property type="entry name" value="Glu/Gln-tRNA-synth_Ib_cat-dom"/>
</dbReference>
<dbReference type="InterPro" id="IPR049940">
    <property type="entry name" value="GluQ/Sye"/>
</dbReference>
<dbReference type="InterPro" id="IPR033910">
    <property type="entry name" value="GluRS_core"/>
</dbReference>
<dbReference type="InterPro" id="IPR014729">
    <property type="entry name" value="Rossmann-like_a/b/a_fold"/>
</dbReference>
<dbReference type="NCBIfam" id="TIGR00464">
    <property type="entry name" value="gltX_bact"/>
    <property type="match status" value="1"/>
</dbReference>
<dbReference type="PANTHER" id="PTHR43311">
    <property type="entry name" value="GLUTAMATE--TRNA LIGASE"/>
    <property type="match status" value="1"/>
</dbReference>
<dbReference type="PANTHER" id="PTHR43311:SF2">
    <property type="entry name" value="GLUTAMATE--TRNA LIGASE, MITOCHONDRIAL-RELATED"/>
    <property type="match status" value="1"/>
</dbReference>
<dbReference type="Pfam" id="PF19269">
    <property type="entry name" value="Anticodon_2"/>
    <property type="match status" value="1"/>
</dbReference>
<dbReference type="Pfam" id="PF00749">
    <property type="entry name" value="tRNA-synt_1c"/>
    <property type="match status" value="1"/>
</dbReference>
<dbReference type="PRINTS" id="PR00987">
    <property type="entry name" value="TRNASYNTHGLU"/>
</dbReference>
<dbReference type="SUPFAM" id="SSF48163">
    <property type="entry name" value="An anticodon-binding domain of class I aminoacyl-tRNA synthetases"/>
    <property type="match status" value="1"/>
</dbReference>
<dbReference type="SUPFAM" id="SSF52374">
    <property type="entry name" value="Nucleotidylyl transferase"/>
    <property type="match status" value="1"/>
</dbReference>
<dbReference type="PROSITE" id="PS00178">
    <property type="entry name" value="AA_TRNA_LIGASE_I"/>
    <property type="match status" value="1"/>
</dbReference>
<comment type="function">
    <text evidence="1">Catalyzes the attachment of glutamate to tRNA(Glu) in a two-step reaction: glutamate is first activated by ATP to form Glu-AMP and then transferred to the acceptor end of tRNA(Glu).</text>
</comment>
<comment type="catalytic activity">
    <reaction evidence="1">
        <text>tRNA(Glu) + L-glutamate + ATP = L-glutamyl-tRNA(Glu) + AMP + diphosphate</text>
        <dbReference type="Rhea" id="RHEA:23540"/>
        <dbReference type="Rhea" id="RHEA-COMP:9663"/>
        <dbReference type="Rhea" id="RHEA-COMP:9680"/>
        <dbReference type="ChEBI" id="CHEBI:29985"/>
        <dbReference type="ChEBI" id="CHEBI:30616"/>
        <dbReference type="ChEBI" id="CHEBI:33019"/>
        <dbReference type="ChEBI" id="CHEBI:78442"/>
        <dbReference type="ChEBI" id="CHEBI:78520"/>
        <dbReference type="ChEBI" id="CHEBI:456215"/>
        <dbReference type="EC" id="6.1.1.17"/>
    </reaction>
</comment>
<comment type="subunit">
    <text evidence="1">Monomer.</text>
</comment>
<comment type="subcellular location">
    <subcellularLocation>
        <location evidence="1">Cytoplasm</location>
    </subcellularLocation>
</comment>
<comment type="similarity">
    <text evidence="1">Belongs to the class-I aminoacyl-tRNA synthetase family. Glutamate--tRNA ligase type 1 subfamily.</text>
</comment>
<evidence type="ECO:0000255" key="1">
    <source>
        <dbReference type="HAMAP-Rule" id="MF_00022"/>
    </source>
</evidence>
<reference key="1">
    <citation type="journal article" date="2005" name="J. Bacteriol.">
        <title>Insights on evolution of virulence and resistance from the complete genome analysis of an early methicillin-resistant Staphylococcus aureus strain and a biofilm-producing methicillin-resistant Staphylococcus epidermidis strain.</title>
        <authorList>
            <person name="Gill S.R."/>
            <person name="Fouts D.E."/>
            <person name="Archer G.L."/>
            <person name="Mongodin E.F."/>
            <person name="DeBoy R.T."/>
            <person name="Ravel J."/>
            <person name="Paulsen I.T."/>
            <person name="Kolonay J.F."/>
            <person name="Brinkac L.M."/>
            <person name="Beanan M.J."/>
            <person name="Dodson R.J."/>
            <person name="Daugherty S.C."/>
            <person name="Madupu R."/>
            <person name="Angiuoli S.V."/>
            <person name="Durkin A.S."/>
            <person name="Haft D.H."/>
            <person name="Vamathevan J.J."/>
            <person name="Khouri H."/>
            <person name="Utterback T.R."/>
            <person name="Lee C."/>
            <person name="Dimitrov G."/>
            <person name="Jiang L."/>
            <person name="Qin H."/>
            <person name="Weidman J."/>
            <person name="Tran K."/>
            <person name="Kang K.H."/>
            <person name="Hance I.R."/>
            <person name="Nelson K.E."/>
            <person name="Fraser C.M."/>
        </authorList>
    </citation>
    <scope>NUCLEOTIDE SEQUENCE [LARGE SCALE GENOMIC DNA]</scope>
    <source>
        <strain>COL</strain>
    </source>
</reference>
<proteinExistence type="inferred from homology"/>